<protein>
    <recommendedName>
        <fullName evidence="1">Matrix protein 1</fullName>
        <shortName evidence="1">M1</shortName>
    </recommendedName>
</protein>
<organismHost>
    <name type="scientific">Aves</name>
    <dbReference type="NCBI Taxonomy" id="8782"/>
</organismHost>
<organismHost>
    <name type="scientific">Equus caballus</name>
    <name type="common">Horse</name>
    <dbReference type="NCBI Taxonomy" id="9796"/>
</organismHost>
<sequence length="252" mass="27812">MSLLTEVETYVLSIVPSGPLKAEIAQRLEDVFAGKNTDLEALMEWLKTRPILSPLTKGILGFVFTLTVPSERGLQRRRFVQNALNGNGDPNNMDKAVKLYKKLKREITFHGAKEVALSYSTGALASCMGLIYNRMGTVTTEVAFGLVCATCEQIADSQHTSHRQMVTTTNPLIRHENRMVLASTTAKAMEQMAGSSEQAANAMEVASQARQMVQAMRTIGTHPSSSAGLKDDLLENLQAYQKRMGVQMRRFK</sequence>
<accession>Q04260</accession>
<name>M1_I89A7</name>
<feature type="chain" id="PRO_0000326331" description="Matrix protein 1">
    <location>
        <begin position="1"/>
        <end position="252"/>
    </location>
</feature>
<feature type="region of interest" description="Membrane-binding" evidence="1">
    <location>
        <begin position="1"/>
        <end position="164"/>
    </location>
</feature>
<feature type="region of interest" description="RNP-binding" evidence="1">
    <location>
        <begin position="165"/>
        <end position="252"/>
    </location>
</feature>
<feature type="short sequence motif" description="Nuclear localization signal" evidence="1">
    <location>
        <begin position="101"/>
        <end position="105"/>
    </location>
</feature>
<organism>
    <name type="scientific">Influenza A virus (strain A/Equine/Jillin/1/1989 H3N8)</name>
    <dbReference type="NCBI Taxonomy" id="385585"/>
    <lineage>
        <taxon>Viruses</taxon>
        <taxon>Riboviria</taxon>
        <taxon>Orthornavirae</taxon>
        <taxon>Negarnaviricota</taxon>
        <taxon>Polyploviricotina</taxon>
        <taxon>Insthoviricetes</taxon>
        <taxon>Articulavirales</taxon>
        <taxon>Orthomyxoviridae</taxon>
        <taxon>Alphainfluenzavirus</taxon>
        <taxon>Alphainfluenzavirus influenzae</taxon>
        <taxon>Influenza A virus</taxon>
    </lineage>
</organism>
<comment type="function">
    <text evidence="1">Plays critical roles in virus replication, from virus entry and uncoating to assembly and budding of the virus particle. M1 binding to ribonucleocapsids (RNPs) in nucleus seems to inhibit viral transcription. Interaction of viral NEP with M1-RNP is thought to promote nuclear export of the complex, which is targeted to the virion assembly site at the apical plasma membrane in polarized epithelial cells. Interactions with NA and HA may bring M1, a non-raft-associated protein, into lipid rafts. Forms a continuous shell on the inner side of the lipid bilayer in virion, where it binds the RNP. During virus entry into cell, the M2 ion channel acidifies the internal virion core, inducing M1 dissociation from the RNP. M1-free RNPs are transported to the nucleus, where viral transcription and replication can take place.</text>
</comment>
<comment type="function">
    <text evidence="1">Determines the virion's shape: spherical or filamentous. Clinical isolates of influenza are characterized by the presence of significant proportion of filamentous virions, whereas after multiple passage on eggs or cell culture, virions have only spherical morphology. Filamentous virions are thought to be important to infect neighboring cells, and spherical virions more suited to spread through aerosol between hosts organisms.</text>
</comment>
<comment type="subunit">
    <text evidence="1">Homodimer and homomultimer. Interacts with NEP. Binds ribonucleocapsid by both interacting with genomic RNA and NP protein. May interact with HA and NA. Cannot bind NP without genomic RNA.</text>
</comment>
<comment type="subcellular location">
    <subcellularLocation>
        <location evidence="1">Virion membrane</location>
        <topology evidence="1">Peripheral membrane protein</topology>
        <orientation evidence="1">Cytoplasmic side</orientation>
    </subcellularLocation>
    <subcellularLocation>
        <location evidence="1">Host nucleus</location>
    </subcellularLocation>
</comment>
<comment type="alternative products">
    <event type="alternative splicing"/>
    <isoform>
        <id>Q04260-1</id>
        <name>M1</name>
        <sequence type="displayed"/>
    </isoform>
    <isoform>
        <id>Q04261-1</id>
        <name>M2</name>
        <sequence type="external"/>
    </isoform>
    <text>Only the first 9 residues are shared by the 2 isoforms.</text>
</comment>
<comment type="miscellaneous">
    <text evidence="1">Most abundant protein in virion. When expressed alone can form virus-like particles in transfected cells.</text>
</comment>
<comment type="similarity">
    <text evidence="1">Belongs to the influenza viruses Matrix protein M1 family.</text>
</comment>
<dbReference type="EMBL" id="M65019">
    <property type="protein sequence ID" value="AAA43254.1"/>
    <property type="molecule type" value="Genomic_RNA"/>
</dbReference>
<dbReference type="PIR" id="PQ0418">
    <property type="entry name" value="PQ0418"/>
</dbReference>
<dbReference type="SMR" id="Q04260"/>
<dbReference type="Proteomes" id="UP000130281">
    <property type="component" value="Genome"/>
</dbReference>
<dbReference type="GO" id="GO:0042025">
    <property type="term" value="C:host cell nucleus"/>
    <property type="evidence" value="ECO:0007669"/>
    <property type="project" value="UniProtKB-SubCell"/>
</dbReference>
<dbReference type="GO" id="GO:0016020">
    <property type="term" value="C:membrane"/>
    <property type="evidence" value="ECO:0007669"/>
    <property type="project" value="UniProtKB-KW"/>
</dbReference>
<dbReference type="GO" id="GO:0055036">
    <property type="term" value="C:virion membrane"/>
    <property type="evidence" value="ECO:0007669"/>
    <property type="project" value="UniProtKB-SubCell"/>
</dbReference>
<dbReference type="GO" id="GO:0003723">
    <property type="term" value="F:RNA binding"/>
    <property type="evidence" value="ECO:0007669"/>
    <property type="project" value="UniProtKB-UniRule"/>
</dbReference>
<dbReference type="GO" id="GO:0039660">
    <property type="term" value="F:structural constituent of virion"/>
    <property type="evidence" value="ECO:0007669"/>
    <property type="project" value="UniProtKB-UniRule"/>
</dbReference>
<dbReference type="GO" id="GO:0046761">
    <property type="term" value="P:viral budding from plasma membrane"/>
    <property type="evidence" value="ECO:0007669"/>
    <property type="project" value="UniProtKB-UniRule"/>
</dbReference>
<dbReference type="FunFam" id="1.10.10.180:FF:000001">
    <property type="entry name" value="Matrix protein 1"/>
    <property type="match status" value="1"/>
</dbReference>
<dbReference type="FunFam" id="1.20.91.10:FF:000001">
    <property type="entry name" value="Matrix protein 1"/>
    <property type="match status" value="1"/>
</dbReference>
<dbReference type="Gene3D" id="1.10.10.180">
    <property type="match status" value="1"/>
</dbReference>
<dbReference type="Gene3D" id="1.20.91.10">
    <property type="match status" value="1"/>
</dbReference>
<dbReference type="HAMAP" id="MF_04068">
    <property type="entry name" value="INFV_M1"/>
    <property type="match status" value="1"/>
</dbReference>
<dbReference type="InterPro" id="IPR036039">
    <property type="entry name" value="Flu_matrix_M1"/>
</dbReference>
<dbReference type="InterPro" id="IPR013188">
    <property type="entry name" value="Flu_matrix_M1_C"/>
</dbReference>
<dbReference type="InterPro" id="IPR001561">
    <property type="entry name" value="Flu_matrix_M1_N"/>
</dbReference>
<dbReference type="InterPro" id="IPR015423">
    <property type="entry name" value="Flu_matrix_M1_N_sub1"/>
</dbReference>
<dbReference type="InterPro" id="IPR015799">
    <property type="entry name" value="Flu_matrix_M1_N_sub2"/>
</dbReference>
<dbReference type="InterPro" id="IPR037533">
    <property type="entry name" value="INFV_M1"/>
</dbReference>
<dbReference type="Pfam" id="PF00598">
    <property type="entry name" value="Flu_M1"/>
    <property type="match status" value="1"/>
</dbReference>
<dbReference type="Pfam" id="PF08289">
    <property type="entry name" value="Flu_M1_C"/>
    <property type="match status" value="1"/>
</dbReference>
<dbReference type="SMART" id="SM00759">
    <property type="entry name" value="Flu_M1_C"/>
    <property type="match status" value="1"/>
</dbReference>
<dbReference type="SUPFAM" id="SSF48145">
    <property type="entry name" value="Influenza virus matrix protein M1"/>
    <property type="match status" value="1"/>
</dbReference>
<gene>
    <name evidence="1" type="primary">M</name>
</gene>
<evidence type="ECO:0000255" key="1">
    <source>
        <dbReference type="HAMAP-Rule" id="MF_04068"/>
    </source>
</evidence>
<proteinExistence type="inferred from homology"/>
<keyword id="KW-0025">Alternative splicing</keyword>
<keyword id="KW-1048">Host nucleus</keyword>
<keyword id="KW-0472">Membrane</keyword>
<keyword id="KW-0694">RNA-binding</keyword>
<keyword id="KW-0468">Viral matrix protein</keyword>
<keyword id="KW-0946">Virion</keyword>
<reference key="1">
    <citation type="journal article" date="1992" name="J. Gen. Virol.">
        <title>Origin and evolutionary characteristics of antigenic reassortant influenza A (H1N2) viruses isolated from man in China.</title>
        <authorList>
            <person name="Li X.S."/>
            <person name="Zhao C.Y."/>
            <person name="Gao H.M."/>
            <person name="Zhang Y.Q."/>
            <person name="Ishida M."/>
            <person name="Kanegae Y."/>
            <person name="Endo A."/>
            <person name="Nerome R."/>
            <person name="Omoe K."/>
            <person name="Nerome K."/>
        </authorList>
    </citation>
    <scope>NUCLEOTIDE SEQUENCE [GENOMIC RNA]</scope>
</reference>